<keyword id="KW-0903">Direct protein sequencing</keyword>
<evidence type="ECO:0000305" key="1"/>
<organism>
    <name type="scientific">Mycobacterium tuberculosis (strain ATCC 25618 / H37Rv)</name>
    <dbReference type="NCBI Taxonomy" id="83332"/>
    <lineage>
        <taxon>Bacteria</taxon>
        <taxon>Bacillati</taxon>
        <taxon>Actinomycetota</taxon>
        <taxon>Actinomycetes</taxon>
        <taxon>Mycobacteriales</taxon>
        <taxon>Mycobacteriaceae</taxon>
        <taxon>Mycobacterium</taxon>
        <taxon>Mycobacterium tuberculosis complex</taxon>
    </lineage>
</organism>
<sequence>VVAFERAK</sequence>
<feature type="chain" id="PRO_0000057960" description="30 kDa non-secretory protein 3">
    <location>
        <begin position="1" status="less than"/>
        <end position="8" status="greater than"/>
    </location>
</feature>
<feature type="non-terminal residue">
    <location>
        <position position="1"/>
    </location>
</feature>
<feature type="non-terminal residue">
    <location>
        <position position="8"/>
    </location>
</feature>
<protein>
    <recommendedName>
        <fullName>30 kDa non-secretory protein 3</fullName>
    </recommendedName>
</protein>
<name>NS3_MYCTU</name>
<comment type="caution">
    <text evidence="1">We are unable to find this protein in the translation of the genome of strain H37Rv.</text>
</comment>
<proteinExistence type="evidence at protein level"/>
<reference key="1">
    <citation type="submission" date="1997-12" db="UniProtKB">
        <authorList>
            <person name="Prasad H.K."/>
            <person name="Annapurna P.S."/>
        </authorList>
    </citation>
    <scope>PROTEIN SEQUENCE</scope>
    <source>
        <strain>ATCC 25618 / H37Rv</strain>
    </source>
</reference>
<accession>P81152</accession>